<sequence>MERNNRKVLVGRVVSDKMDKTITVVVETKRNHPVYGKRINYSKKYKAHDENNVAKEGDIVRIMETRPLSATKRFRLVEVVEEAVII</sequence>
<feature type="chain" id="PRO_1000143310" description="Small ribosomal subunit protein uS17">
    <location>
        <begin position="1"/>
        <end position="86"/>
    </location>
</feature>
<name>RS17_STRPI</name>
<comment type="function">
    <text evidence="1">One of the primary rRNA binding proteins, it binds specifically to the 5'-end of 16S ribosomal RNA.</text>
</comment>
<comment type="subunit">
    <text evidence="1">Part of the 30S ribosomal subunit.</text>
</comment>
<comment type="similarity">
    <text evidence="1">Belongs to the universal ribosomal protein uS17 family.</text>
</comment>
<dbReference type="EMBL" id="CP000936">
    <property type="protein sequence ID" value="ACA35935.1"/>
    <property type="molecule type" value="Genomic_DNA"/>
</dbReference>
<dbReference type="RefSeq" id="WP_000440801.1">
    <property type="nucleotide sequence ID" value="NC_010380.1"/>
</dbReference>
<dbReference type="SMR" id="B1I8K7"/>
<dbReference type="GeneID" id="93920913"/>
<dbReference type="KEGG" id="spv:SPH_0332"/>
<dbReference type="HOGENOM" id="CLU_073626_1_0_9"/>
<dbReference type="Proteomes" id="UP000002163">
    <property type="component" value="Chromosome"/>
</dbReference>
<dbReference type="GO" id="GO:0022627">
    <property type="term" value="C:cytosolic small ribosomal subunit"/>
    <property type="evidence" value="ECO:0007669"/>
    <property type="project" value="TreeGrafter"/>
</dbReference>
<dbReference type="GO" id="GO:0019843">
    <property type="term" value="F:rRNA binding"/>
    <property type="evidence" value="ECO:0007669"/>
    <property type="project" value="UniProtKB-UniRule"/>
</dbReference>
<dbReference type="GO" id="GO:0003735">
    <property type="term" value="F:structural constituent of ribosome"/>
    <property type="evidence" value="ECO:0007669"/>
    <property type="project" value="InterPro"/>
</dbReference>
<dbReference type="GO" id="GO:0006412">
    <property type="term" value="P:translation"/>
    <property type="evidence" value="ECO:0007669"/>
    <property type="project" value="UniProtKB-UniRule"/>
</dbReference>
<dbReference type="CDD" id="cd00364">
    <property type="entry name" value="Ribosomal_uS17"/>
    <property type="match status" value="1"/>
</dbReference>
<dbReference type="FunFam" id="2.40.50.140:FF:000026">
    <property type="entry name" value="30S ribosomal protein S17"/>
    <property type="match status" value="1"/>
</dbReference>
<dbReference type="Gene3D" id="2.40.50.140">
    <property type="entry name" value="Nucleic acid-binding proteins"/>
    <property type="match status" value="1"/>
</dbReference>
<dbReference type="HAMAP" id="MF_01345_B">
    <property type="entry name" value="Ribosomal_uS17_B"/>
    <property type="match status" value="1"/>
</dbReference>
<dbReference type="InterPro" id="IPR012340">
    <property type="entry name" value="NA-bd_OB-fold"/>
</dbReference>
<dbReference type="InterPro" id="IPR000266">
    <property type="entry name" value="Ribosomal_uS17"/>
</dbReference>
<dbReference type="InterPro" id="IPR019984">
    <property type="entry name" value="Ribosomal_uS17_bact/chlr"/>
</dbReference>
<dbReference type="InterPro" id="IPR019979">
    <property type="entry name" value="Ribosomal_uS17_CS"/>
</dbReference>
<dbReference type="NCBIfam" id="NF004123">
    <property type="entry name" value="PRK05610.1"/>
    <property type="match status" value="1"/>
</dbReference>
<dbReference type="NCBIfam" id="TIGR03635">
    <property type="entry name" value="uS17_bact"/>
    <property type="match status" value="1"/>
</dbReference>
<dbReference type="PANTHER" id="PTHR10744">
    <property type="entry name" value="40S RIBOSOMAL PROTEIN S11 FAMILY MEMBER"/>
    <property type="match status" value="1"/>
</dbReference>
<dbReference type="PANTHER" id="PTHR10744:SF1">
    <property type="entry name" value="SMALL RIBOSOMAL SUBUNIT PROTEIN US17M"/>
    <property type="match status" value="1"/>
</dbReference>
<dbReference type="Pfam" id="PF00366">
    <property type="entry name" value="Ribosomal_S17"/>
    <property type="match status" value="1"/>
</dbReference>
<dbReference type="PRINTS" id="PR00973">
    <property type="entry name" value="RIBOSOMALS17"/>
</dbReference>
<dbReference type="SUPFAM" id="SSF50249">
    <property type="entry name" value="Nucleic acid-binding proteins"/>
    <property type="match status" value="1"/>
</dbReference>
<dbReference type="PROSITE" id="PS00056">
    <property type="entry name" value="RIBOSOMAL_S17"/>
    <property type="match status" value="1"/>
</dbReference>
<reference key="1">
    <citation type="journal article" date="2010" name="Genome Biol.">
        <title>Structure and dynamics of the pan-genome of Streptococcus pneumoniae and closely related species.</title>
        <authorList>
            <person name="Donati C."/>
            <person name="Hiller N.L."/>
            <person name="Tettelin H."/>
            <person name="Muzzi A."/>
            <person name="Croucher N.J."/>
            <person name="Angiuoli S.V."/>
            <person name="Oggioni M."/>
            <person name="Dunning Hotopp J.C."/>
            <person name="Hu F.Z."/>
            <person name="Riley D.R."/>
            <person name="Covacci A."/>
            <person name="Mitchell T.J."/>
            <person name="Bentley S.D."/>
            <person name="Kilian M."/>
            <person name="Ehrlich G.D."/>
            <person name="Rappuoli R."/>
            <person name="Moxon E.R."/>
            <person name="Masignani V."/>
        </authorList>
    </citation>
    <scope>NUCLEOTIDE SEQUENCE [LARGE SCALE GENOMIC DNA]</scope>
    <source>
        <strain>Hungary19A-6</strain>
    </source>
</reference>
<accession>B1I8K7</accession>
<evidence type="ECO:0000255" key="1">
    <source>
        <dbReference type="HAMAP-Rule" id="MF_01345"/>
    </source>
</evidence>
<evidence type="ECO:0000305" key="2"/>
<keyword id="KW-0687">Ribonucleoprotein</keyword>
<keyword id="KW-0689">Ribosomal protein</keyword>
<keyword id="KW-0694">RNA-binding</keyword>
<keyword id="KW-0699">rRNA-binding</keyword>
<gene>
    <name evidence="1" type="primary">rpsQ</name>
    <name type="ordered locus">SPH_0332</name>
</gene>
<proteinExistence type="inferred from homology"/>
<protein>
    <recommendedName>
        <fullName evidence="1">Small ribosomal subunit protein uS17</fullName>
    </recommendedName>
    <alternativeName>
        <fullName evidence="2">30S ribosomal protein S17</fullName>
    </alternativeName>
</protein>
<organism>
    <name type="scientific">Streptococcus pneumoniae (strain Hungary19A-6)</name>
    <dbReference type="NCBI Taxonomy" id="487214"/>
    <lineage>
        <taxon>Bacteria</taxon>
        <taxon>Bacillati</taxon>
        <taxon>Bacillota</taxon>
        <taxon>Bacilli</taxon>
        <taxon>Lactobacillales</taxon>
        <taxon>Streptococcaceae</taxon>
        <taxon>Streptococcus</taxon>
    </lineage>
</organism>